<sequence length="1567" mass="174782">MASQPPQPPSGQPDTQYEEYQSEVITETTNRPTPAADVYEITPTNDVMDDRYEHEHDDYESGAMYETVRTWSPQSRPELVRIASVFSRIDSHPDVAPTTEDGGQLNRRDTLAGVKIGDPVLDPTKPEFDFYKWARMFTHVMEKEGIKRNRTGVMFRNLTVLGSGSAVQYQDTFLSPFAAPFRPGELCGKGRNPEKVILHDFNGAIREGELLMVLGRPGSGCSTFLKAICGELHGLQKKKESIIHYNGVSQHTFKKELRGEAVYSAEDEHHFPHLTVGQTLEFAAAARTPSKRVLGLSRKDFSTHLARVMMSVFGLSHTYNTKVGDDYVRGVSGGERKRVSIAEIALSGAPICCWDNSTRGLDSATALEFTKALKIGSQVGGITQCLAIYQASQAIYDIFDKVIVLYEGRQIFFGPTRIAKQYFEEMGWYCPPRQTTADFLTSVTNPKERIAKEGYENRVPRTAVEFERYWKQSQNNKLLLADMDRFEAEYPLEEGHLEKLRETHGQAQAKHTASKSPYRISVPMQVKLCTVRAYQRLWGDKSSTIATNISQIMMALIIGSLFFDTPQTTDGFFAKGSVIFFAILLNGLMSITEINGLCKATDPIVPNAQRPIVVKHVNFAFYHAYSEALAGIVADIPIKFLLALVFNIIIYFLGGLERSAAKFFIFFLFTFITILTMSAIFRTLAAATKTIPQALALAGVMILALVIYTGFTLQPSYMHPWFKWILYINPIAYAYEALLVNEVHGNRYRCATPIPPYGSGTNFACAVAGAVPGEMSVSGDAWVESSYDYSYAHIWRNLGILLGFLAFFYFVYLVVSELNLSSASSAEFLVFRRGHLPKNFQGSKDEEAAAGGVMHPNDPARLPPTNTNGAAGETAPGGSTVAVIPPQKDIFTWRNVTYDITIKGEPRRLLDNISGWVRPGTLTALMGVSGAGKTTLLDALAQRTTMGVITGDMLVNGRPLDSSFQRKTGYVQQQDLHLETTTVREALRFSADLRQPKSVSRKEKYEYVEDVIKMLSMEDFSEAVVGNPGEGLNVEQRKLLTIGVELAAKPQLLLFLDEPTSGLDSQSSWSIVTFLRKLADNGQAVLSTIHQPSGILFEQFDRLLFLAKGGRTVYFGDIGKNSETLLNYFETHGAEPCGPSENPAEYMLNIVGAGPSGKSKIDWPAVWKESEESRHVQQELDRIQSETSKRNEGHGQSAEKEPGEFAMPFTSQLYCVTTRVFQQYWRTPSYIWGKLLLGLTSALFIGFSFFLQNSSMAGLQNSLFSIFMLTTIFSSLVQQIMPRFVTQRDLFEVRERPSRAYSWKVFLLANIIVEIPYQILLGIIAWASLFYPTFGAHLSSERQGILLLYCVQFFIFASTFAQMIIAGLPDAETAGGIATTMFGLMVTFNGVLQKPNALPGFWRFMWRVSPITYTVGGLAATSLHSREVKCAQNELAIFDPPSGATCAQYLQKLVEAGAPGKLYNPMSTSQCQYCPLSSGDQFLGGSEIHWSDRWRNFGIGWAYIVFNIFATVALYYLIRVRKSSGRPNRIISVITYHLSQFGTYCRAFITGRKEKCPRKREQIGKIY</sequence>
<proteinExistence type="evidence at transcript level"/>
<name>MDR1_TRIT1</name>
<reference key="1">
    <citation type="journal article" date="2012" name="MBio">
        <title>Comparative genome analysis of Trichophyton rubrum and related dermatophytes reveals candidate genes involved in infection.</title>
        <authorList>
            <person name="Martinez D.A."/>
            <person name="Oliver B.G."/>
            <person name="Graeser Y."/>
            <person name="Goldberg J.M."/>
            <person name="Li W."/>
            <person name="Martinez-Rossi N.M."/>
            <person name="Monod M."/>
            <person name="Shelest E."/>
            <person name="Barton R.C."/>
            <person name="Birch E."/>
            <person name="Brakhage A.A."/>
            <person name="Chen Z."/>
            <person name="Gurr S.J."/>
            <person name="Heiman D."/>
            <person name="Heitman J."/>
            <person name="Kosti I."/>
            <person name="Rossi A."/>
            <person name="Saif S."/>
            <person name="Samalova M."/>
            <person name="Saunders C.W."/>
            <person name="Shea T."/>
            <person name="Summerbell R.C."/>
            <person name="Xu J."/>
            <person name="Young S."/>
            <person name="Zeng Q."/>
            <person name="Birren B.W."/>
            <person name="Cuomo C.A."/>
            <person name="White T.C."/>
        </authorList>
    </citation>
    <scope>NUCLEOTIDE SEQUENCE [LARGE SCALE GENOMIC DNA]</scope>
    <source>
        <strain>CBS 112818</strain>
    </source>
</reference>
<reference key="2">
    <citation type="journal article" date="2016" name="J. Med. Microbiol.">
        <title>Compensatory expression of multidrug-resistance genes encoding ABC transporters in dermatophytes.</title>
        <authorList>
            <person name="Martins M.P."/>
            <person name="Franceschini A.C.C."/>
            <person name="Jacob T.R."/>
            <person name="Rossi A."/>
            <person name="Martinez-Rossi N.M."/>
        </authorList>
    </citation>
    <scope>INDUCTION</scope>
</reference>
<comment type="function">
    <text evidence="1">Pleiotropic ABC efflux transporter that may be involved in the modulation susceptibility to a wide range of unrelated cytotoxic compounds.</text>
</comment>
<comment type="catalytic activity">
    <reaction evidence="2">
        <text>voriconazole(in) + ATP + H2O = voriconazole(out) + ADP + phosphate + H(+)</text>
        <dbReference type="Rhea" id="RHEA:61912"/>
        <dbReference type="ChEBI" id="CHEBI:10023"/>
        <dbReference type="ChEBI" id="CHEBI:15377"/>
        <dbReference type="ChEBI" id="CHEBI:15378"/>
        <dbReference type="ChEBI" id="CHEBI:30616"/>
        <dbReference type="ChEBI" id="CHEBI:43474"/>
        <dbReference type="ChEBI" id="CHEBI:456216"/>
    </reaction>
    <physiologicalReaction direction="left-to-right" evidence="2">
        <dbReference type="Rhea" id="RHEA:61913"/>
    </physiologicalReaction>
</comment>
<comment type="catalytic activity">
    <reaction evidence="2">
        <text>fluconazole(in) + ATP + H2O = fluconazole(out) + ADP + phosphate + H(+)</text>
        <dbReference type="Rhea" id="RHEA:61916"/>
        <dbReference type="ChEBI" id="CHEBI:15377"/>
        <dbReference type="ChEBI" id="CHEBI:15378"/>
        <dbReference type="ChEBI" id="CHEBI:30616"/>
        <dbReference type="ChEBI" id="CHEBI:43474"/>
        <dbReference type="ChEBI" id="CHEBI:46081"/>
        <dbReference type="ChEBI" id="CHEBI:456216"/>
    </reaction>
    <physiologicalReaction direction="left-to-right" evidence="2">
        <dbReference type="Rhea" id="RHEA:61917"/>
    </physiologicalReaction>
</comment>
<comment type="catalytic activity">
    <reaction evidence="2">
        <text>(R)-miconazole(in) + ATP + H2O = (R)-miconazole(out) + ADP + phosphate + H(+)</text>
        <dbReference type="Rhea" id="RHEA:61928"/>
        <dbReference type="ChEBI" id="CHEBI:15377"/>
        <dbReference type="ChEBI" id="CHEBI:15378"/>
        <dbReference type="ChEBI" id="CHEBI:30616"/>
        <dbReference type="ChEBI" id="CHEBI:43474"/>
        <dbReference type="ChEBI" id="CHEBI:82894"/>
        <dbReference type="ChEBI" id="CHEBI:456216"/>
    </reaction>
    <physiologicalReaction direction="left-to-right" evidence="2">
        <dbReference type="Rhea" id="RHEA:61929"/>
    </physiologicalReaction>
</comment>
<comment type="catalytic activity">
    <reaction evidence="2">
        <text>(S)-miconazole(in) + ATP + H2O = (S)-miconazole(out) + ADP + phosphate + H(+)</text>
        <dbReference type="Rhea" id="RHEA:61932"/>
        <dbReference type="ChEBI" id="CHEBI:15377"/>
        <dbReference type="ChEBI" id="CHEBI:15378"/>
        <dbReference type="ChEBI" id="CHEBI:30616"/>
        <dbReference type="ChEBI" id="CHEBI:43474"/>
        <dbReference type="ChEBI" id="CHEBI:82897"/>
        <dbReference type="ChEBI" id="CHEBI:456216"/>
    </reaction>
    <physiologicalReaction direction="left-to-right" evidence="2">
        <dbReference type="Rhea" id="RHEA:61933"/>
    </physiologicalReaction>
</comment>
<comment type="subcellular location">
    <subcellularLocation>
        <location evidence="9">Cell membrane</location>
        <topology evidence="3">Multi-pass membrane protein</topology>
    </subcellularLocation>
</comment>
<comment type="induction">
    <text evidence="7">Expression is induced upon exposure to griseofulvin and itraconazole.</text>
</comment>
<comment type="similarity">
    <text evidence="9">Belongs to the ABC transporter superfamily. ABCG family. PDR (TC 3.A.1.205) subfamily.</text>
</comment>
<gene>
    <name evidence="8" type="primary">MDR1</name>
    <name type="ORF">TESG_01875</name>
</gene>
<keyword id="KW-0067">ATP-binding</keyword>
<keyword id="KW-1003">Cell membrane</keyword>
<keyword id="KW-0325">Glycoprotein</keyword>
<keyword id="KW-0472">Membrane</keyword>
<keyword id="KW-0547">Nucleotide-binding</keyword>
<keyword id="KW-0677">Repeat</keyword>
<keyword id="KW-0812">Transmembrane</keyword>
<keyword id="KW-1133">Transmembrane helix</keyword>
<keyword id="KW-0813">Transport</keyword>
<evidence type="ECO:0000250" key="1">
    <source>
        <dbReference type="UniProtKB" id="A0A059J0G5"/>
    </source>
</evidence>
<evidence type="ECO:0000250" key="2">
    <source>
        <dbReference type="UniProtKB" id="F2SHL1"/>
    </source>
</evidence>
<evidence type="ECO:0000255" key="3"/>
<evidence type="ECO:0000255" key="4">
    <source>
        <dbReference type="PROSITE-ProRule" id="PRU00434"/>
    </source>
</evidence>
<evidence type="ECO:0000255" key="5">
    <source>
        <dbReference type="PROSITE-ProRule" id="PRU00498"/>
    </source>
</evidence>
<evidence type="ECO:0000256" key="6">
    <source>
        <dbReference type="SAM" id="MobiDB-lite"/>
    </source>
</evidence>
<evidence type="ECO:0000269" key="7">
    <source>
    </source>
</evidence>
<evidence type="ECO:0000303" key="8">
    <source>
    </source>
</evidence>
<evidence type="ECO:0000305" key="9"/>
<dbReference type="EMBL" id="GG698483">
    <property type="protein sequence ID" value="EGD94355.1"/>
    <property type="molecule type" value="Genomic_DNA"/>
</dbReference>
<dbReference type="SMR" id="F2RSQ6"/>
<dbReference type="GlyCosmos" id="F2RSQ6">
    <property type="glycosylation" value="7 sites, No reported glycans"/>
</dbReference>
<dbReference type="HOGENOM" id="CLU_000604_35_0_1"/>
<dbReference type="OrthoDB" id="1446at34384"/>
<dbReference type="Proteomes" id="UP000009172">
    <property type="component" value="Unassembled WGS sequence"/>
</dbReference>
<dbReference type="GO" id="GO:0005886">
    <property type="term" value="C:plasma membrane"/>
    <property type="evidence" value="ECO:0007669"/>
    <property type="project" value="UniProtKB-SubCell"/>
</dbReference>
<dbReference type="GO" id="GO:0140359">
    <property type="term" value="F:ABC-type transporter activity"/>
    <property type="evidence" value="ECO:0007669"/>
    <property type="project" value="InterPro"/>
</dbReference>
<dbReference type="GO" id="GO:0005524">
    <property type="term" value="F:ATP binding"/>
    <property type="evidence" value="ECO:0007669"/>
    <property type="project" value="UniProtKB-KW"/>
</dbReference>
<dbReference type="GO" id="GO:0016887">
    <property type="term" value="F:ATP hydrolysis activity"/>
    <property type="evidence" value="ECO:0007669"/>
    <property type="project" value="InterPro"/>
</dbReference>
<dbReference type="CDD" id="cd03233">
    <property type="entry name" value="ABCG_PDR_domain1"/>
    <property type="match status" value="1"/>
</dbReference>
<dbReference type="CDD" id="cd03232">
    <property type="entry name" value="ABCG_PDR_domain2"/>
    <property type="match status" value="1"/>
</dbReference>
<dbReference type="FunFam" id="3.40.50.300:FF:000054">
    <property type="entry name" value="ABC multidrug transporter atrF"/>
    <property type="match status" value="1"/>
</dbReference>
<dbReference type="Gene3D" id="3.40.50.300">
    <property type="entry name" value="P-loop containing nucleotide triphosphate hydrolases"/>
    <property type="match status" value="2"/>
</dbReference>
<dbReference type="InterPro" id="IPR003593">
    <property type="entry name" value="AAA+_ATPase"/>
</dbReference>
<dbReference type="InterPro" id="IPR013525">
    <property type="entry name" value="ABC2_TM"/>
</dbReference>
<dbReference type="InterPro" id="IPR029481">
    <property type="entry name" value="ABC_trans_N"/>
</dbReference>
<dbReference type="InterPro" id="IPR003439">
    <property type="entry name" value="ABC_transporter-like_ATP-bd"/>
</dbReference>
<dbReference type="InterPro" id="IPR017871">
    <property type="entry name" value="ABC_transporter-like_CS"/>
</dbReference>
<dbReference type="InterPro" id="IPR043926">
    <property type="entry name" value="ABCG_dom"/>
</dbReference>
<dbReference type="InterPro" id="IPR034001">
    <property type="entry name" value="ABCG_PDR_1"/>
</dbReference>
<dbReference type="InterPro" id="IPR034003">
    <property type="entry name" value="ABCG_PDR_2"/>
</dbReference>
<dbReference type="InterPro" id="IPR027417">
    <property type="entry name" value="P-loop_NTPase"/>
</dbReference>
<dbReference type="InterPro" id="IPR010929">
    <property type="entry name" value="PDR_CDR_ABC"/>
</dbReference>
<dbReference type="PANTHER" id="PTHR19241">
    <property type="entry name" value="ATP-BINDING CASSETTE TRANSPORTER"/>
    <property type="match status" value="1"/>
</dbReference>
<dbReference type="Pfam" id="PF01061">
    <property type="entry name" value="ABC2_membrane"/>
    <property type="match status" value="2"/>
</dbReference>
<dbReference type="Pfam" id="PF19055">
    <property type="entry name" value="ABC2_membrane_7"/>
    <property type="match status" value="1"/>
</dbReference>
<dbReference type="Pfam" id="PF00005">
    <property type="entry name" value="ABC_tran"/>
    <property type="match status" value="2"/>
</dbReference>
<dbReference type="Pfam" id="PF14510">
    <property type="entry name" value="ABC_trans_N"/>
    <property type="match status" value="1"/>
</dbReference>
<dbReference type="Pfam" id="PF06422">
    <property type="entry name" value="PDR_CDR"/>
    <property type="match status" value="2"/>
</dbReference>
<dbReference type="SMART" id="SM00382">
    <property type="entry name" value="AAA"/>
    <property type="match status" value="2"/>
</dbReference>
<dbReference type="SUPFAM" id="SSF52540">
    <property type="entry name" value="P-loop containing nucleoside triphosphate hydrolases"/>
    <property type="match status" value="2"/>
</dbReference>
<dbReference type="PROSITE" id="PS00211">
    <property type="entry name" value="ABC_TRANSPORTER_1"/>
    <property type="match status" value="1"/>
</dbReference>
<dbReference type="PROSITE" id="PS50893">
    <property type="entry name" value="ABC_TRANSPORTER_2"/>
    <property type="match status" value="2"/>
</dbReference>
<accession>F2RSQ6</accession>
<organism>
    <name type="scientific">Trichophyton tonsurans (strain CBS 112818)</name>
    <name type="common">Scalp ringworm fungus</name>
    <dbReference type="NCBI Taxonomy" id="647933"/>
    <lineage>
        <taxon>Eukaryota</taxon>
        <taxon>Fungi</taxon>
        <taxon>Dikarya</taxon>
        <taxon>Ascomycota</taxon>
        <taxon>Pezizomycotina</taxon>
        <taxon>Eurotiomycetes</taxon>
        <taxon>Eurotiomycetidae</taxon>
        <taxon>Onygenales</taxon>
        <taxon>Arthrodermataceae</taxon>
        <taxon>Trichophyton</taxon>
    </lineage>
</organism>
<protein>
    <recommendedName>
        <fullName evidence="8">ABC multidrug transporter MDR1</fullName>
    </recommendedName>
    <alternativeName>
        <fullName evidence="8">Multidrug resistance protein 1</fullName>
    </alternativeName>
</protein>
<feature type="chain" id="PRO_0000447177" description="ABC multidrug transporter MDR1">
    <location>
        <begin position="1"/>
        <end position="1567"/>
    </location>
</feature>
<feature type="transmembrane region" description="Helical" evidence="3">
    <location>
        <begin position="543"/>
        <end position="563"/>
    </location>
</feature>
<feature type="transmembrane region" description="Helical" evidence="3">
    <location>
        <begin position="571"/>
        <end position="591"/>
    </location>
</feature>
<feature type="transmembrane region" description="Helical" evidence="3">
    <location>
        <begin position="636"/>
        <end position="656"/>
    </location>
</feature>
<feature type="transmembrane region" description="Helical" evidence="3">
    <location>
        <begin position="661"/>
        <end position="681"/>
    </location>
</feature>
<feature type="transmembrane region" description="Helical" evidence="3">
    <location>
        <begin position="691"/>
        <end position="711"/>
    </location>
</feature>
<feature type="transmembrane region" description="Helical" evidence="3">
    <location>
        <begin position="798"/>
        <end position="818"/>
    </location>
</feature>
<feature type="transmembrane region" description="Helical" evidence="3">
    <location>
        <begin position="1231"/>
        <end position="1251"/>
    </location>
</feature>
<feature type="transmembrane region" description="Helical" evidence="3">
    <location>
        <begin position="1257"/>
        <end position="1277"/>
    </location>
</feature>
<feature type="transmembrane region" description="Helical" evidence="3">
    <location>
        <begin position="1305"/>
        <end position="1325"/>
    </location>
</feature>
<feature type="transmembrane region" description="Helical" evidence="3">
    <location>
        <begin position="1345"/>
        <end position="1365"/>
    </location>
</feature>
<feature type="transmembrane region" description="Helical" evidence="3">
    <location>
        <begin position="1372"/>
        <end position="1392"/>
    </location>
</feature>
<feature type="transmembrane region" description="Helical" evidence="3">
    <location>
        <begin position="1498"/>
        <end position="1518"/>
    </location>
</feature>
<feature type="domain" description="ABC transporter 1" evidence="4">
    <location>
        <begin position="167"/>
        <end position="432"/>
    </location>
</feature>
<feature type="domain" description="ABC transporter 2" evidence="4">
    <location>
        <begin position="891"/>
        <end position="1134"/>
    </location>
</feature>
<feature type="region of interest" description="Disordered" evidence="6">
    <location>
        <begin position="1"/>
        <end position="37"/>
    </location>
</feature>
<feature type="region of interest" description="Disordered" evidence="6">
    <location>
        <begin position="1172"/>
        <end position="1202"/>
    </location>
</feature>
<feature type="compositionally biased region" description="Pro residues" evidence="6">
    <location>
        <begin position="1"/>
        <end position="11"/>
    </location>
</feature>
<feature type="compositionally biased region" description="Polar residues" evidence="6">
    <location>
        <begin position="22"/>
        <end position="32"/>
    </location>
</feature>
<feature type="binding site" evidence="4">
    <location>
        <begin position="927"/>
        <end position="934"/>
    </location>
    <ligand>
        <name>ATP</name>
        <dbReference type="ChEBI" id="CHEBI:30616"/>
    </ligand>
</feature>
<feature type="glycosylation site" description="N-linked (GlcNAc...) asparagine" evidence="5">
    <location>
        <position position="149"/>
    </location>
</feature>
<feature type="glycosylation site" description="N-linked (GlcNAc...) asparagine" evidence="5">
    <location>
        <position position="157"/>
    </location>
</feature>
<feature type="glycosylation site" description="N-linked (GlcNAc...) asparagine" evidence="5">
    <location>
        <position position="356"/>
    </location>
</feature>
<feature type="glycosylation site" description="N-linked (GlcNAc...) asparagine" evidence="5">
    <location>
        <position position="819"/>
    </location>
</feature>
<feature type="glycosylation site" description="N-linked (GlcNAc...) asparagine" evidence="5">
    <location>
        <position position="895"/>
    </location>
</feature>
<feature type="glycosylation site" description="N-linked (GlcNAc...) asparagine" evidence="5">
    <location>
        <position position="912"/>
    </location>
</feature>
<feature type="glycosylation site" description="N-linked (GlcNAc...) asparagine" evidence="5">
    <location>
        <position position="1253"/>
    </location>
</feature>